<evidence type="ECO:0000255" key="1">
    <source>
        <dbReference type="PROSITE-ProRule" id="PRU00332"/>
    </source>
</evidence>
<evidence type="ECO:0000256" key="2">
    <source>
        <dbReference type="SAM" id="MobiDB-lite"/>
    </source>
</evidence>
<evidence type="ECO:0000269" key="3">
    <source>
    </source>
</evidence>
<evidence type="ECO:0000305" key="4"/>
<evidence type="ECO:0007744" key="5">
    <source>
    </source>
</evidence>
<evidence type="ECO:0007744" key="6">
    <source>
    </source>
</evidence>
<keyword id="KW-0938">Abscisic acid signaling pathway</keyword>
<keyword id="KW-0007">Acetylation</keyword>
<keyword id="KW-0963">Cytoplasm</keyword>
<keyword id="KW-1184">Jasmonic acid signaling pathway</keyword>
<keyword id="KW-0597">Phosphoprotein</keyword>
<keyword id="KW-1185">Reference proteome</keyword>
<keyword id="KW-0694">RNA-binding</keyword>
<gene>
    <name type="primary">LARP1C</name>
    <name type="ordered locus">At4g35890</name>
    <name type="ORF">T19K4.20</name>
</gene>
<proteinExistence type="evidence at protein level"/>
<feature type="initiator methionine" description="Removed" evidence="6">
    <location>
        <position position="1"/>
    </location>
</feature>
<feature type="chain" id="PRO_0000428668" description="La-related protein 1C">
    <location>
        <begin position="2"/>
        <end position="523"/>
    </location>
</feature>
<feature type="domain" description="HTH La-type RNA-binding" evidence="1">
    <location>
        <begin position="363"/>
        <end position="452"/>
    </location>
</feature>
<feature type="region of interest" description="Disordered" evidence="2">
    <location>
        <begin position="1"/>
        <end position="52"/>
    </location>
</feature>
<feature type="region of interest" description="Disordered" evidence="2">
    <location>
        <begin position="95"/>
        <end position="313"/>
    </location>
</feature>
<feature type="region of interest" description="Disordered" evidence="2">
    <location>
        <begin position="474"/>
        <end position="523"/>
    </location>
</feature>
<feature type="compositionally biased region" description="Low complexity" evidence="2">
    <location>
        <begin position="1"/>
        <end position="16"/>
    </location>
</feature>
<feature type="compositionally biased region" description="Polar residues" evidence="2">
    <location>
        <begin position="22"/>
        <end position="31"/>
    </location>
</feature>
<feature type="compositionally biased region" description="Low complexity" evidence="2">
    <location>
        <begin position="32"/>
        <end position="44"/>
    </location>
</feature>
<feature type="compositionally biased region" description="Low complexity" evidence="2">
    <location>
        <begin position="146"/>
        <end position="169"/>
    </location>
</feature>
<feature type="compositionally biased region" description="Polar residues" evidence="2">
    <location>
        <begin position="206"/>
        <end position="270"/>
    </location>
</feature>
<feature type="compositionally biased region" description="Polar residues" evidence="2">
    <location>
        <begin position="282"/>
        <end position="305"/>
    </location>
</feature>
<feature type="compositionally biased region" description="Polar residues" evidence="2">
    <location>
        <begin position="477"/>
        <end position="516"/>
    </location>
</feature>
<feature type="modified residue" description="N-acetylalanine" evidence="6">
    <location>
        <position position="2"/>
    </location>
</feature>
<feature type="modified residue" description="Phosphoserine" evidence="5">
    <location>
        <position position="33"/>
    </location>
</feature>
<accession>Q94K80</accession>
<accession>O65626</accession>
<protein>
    <recommendedName>
        <fullName>La-related protein 1C</fullName>
        <shortName>AtLARP1c</shortName>
    </recommendedName>
</protein>
<organism>
    <name type="scientific">Arabidopsis thaliana</name>
    <name type="common">Mouse-ear cress</name>
    <dbReference type="NCBI Taxonomy" id="3702"/>
    <lineage>
        <taxon>Eukaryota</taxon>
        <taxon>Viridiplantae</taxon>
        <taxon>Streptophyta</taxon>
        <taxon>Embryophyta</taxon>
        <taxon>Tracheophyta</taxon>
        <taxon>Spermatophyta</taxon>
        <taxon>Magnoliopsida</taxon>
        <taxon>eudicotyledons</taxon>
        <taxon>Gunneridae</taxon>
        <taxon>Pentapetalae</taxon>
        <taxon>rosids</taxon>
        <taxon>malvids</taxon>
        <taxon>Brassicales</taxon>
        <taxon>Brassicaceae</taxon>
        <taxon>Camelineae</taxon>
        <taxon>Arabidopsis</taxon>
    </lineage>
</organism>
<reference key="1">
    <citation type="journal article" date="1999" name="Nature">
        <title>Sequence and analysis of chromosome 4 of the plant Arabidopsis thaliana.</title>
        <authorList>
            <person name="Mayer K.F.X."/>
            <person name="Schueller C."/>
            <person name="Wambutt R."/>
            <person name="Murphy G."/>
            <person name="Volckaert G."/>
            <person name="Pohl T."/>
            <person name="Duesterhoeft A."/>
            <person name="Stiekema W."/>
            <person name="Entian K.-D."/>
            <person name="Terryn N."/>
            <person name="Harris B."/>
            <person name="Ansorge W."/>
            <person name="Brandt P."/>
            <person name="Grivell L.A."/>
            <person name="Rieger M."/>
            <person name="Weichselgartner M."/>
            <person name="de Simone V."/>
            <person name="Obermaier B."/>
            <person name="Mache R."/>
            <person name="Mueller M."/>
            <person name="Kreis M."/>
            <person name="Delseny M."/>
            <person name="Puigdomenech P."/>
            <person name="Watson M."/>
            <person name="Schmidtheini T."/>
            <person name="Reichert B."/>
            <person name="Portetelle D."/>
            <person name="Perez-Alonso M."/>
            <person name="Boutry M."/>
            <person name="Bancroft I."/>
            <person name="Vos P."/>
            <person name="Hoheisel J."/>
            <person name="Zimmermann W."/>
            <person name="Wedler H."/>
            <person name="Ridley P."/>
            <person name="Langham S.-A."/>
            <person name="McCullagh B."/>
            <person name="Bilham L."/>
            <person name="Robben J."/>
            <person name="van der Schueren J."/>
            <person name="Grymonprez B."/>
            <person name="Chuang Y.-J."/>
            <person name="Vandenbussche F."/>
            <person name="Braeken M."/>
            <person name="Weltjens I."/>
            <person name="Voet M."/>
            <person name="Bastiaens I."/>
            <person name="Aert R."/>
            <person name="Defoor E."/>
            <person name="Weitzenegger T."/>
            <person name="Bothe G."/>
            <person name="Ramsperger U."/>
            <person name="Hilbert H."/>
            <person name="Braun M."/>
            <person name="Holzer E."/>
            <person name="Brandt A."/>
            <person name="Peters S."/>
            <person name="van Staveren M."/>
            <person name="Dirkse W."/>
            <person name="Mooijman P."/>
            <person name="Klein Lankhorst R."/>
            <person name="Rose M."/>
            <person name="Hauf J."/>
            <person name="Koetter P."/>
            <person name="Berneiser S."/>
            <person name="Hempel S."/>
            <person name="Feldpausch M."/>
            <person name="Lamberth S."/>
            <person name="Van den Daele H."/>
            <person name="De Keyser A."/>
            <person name="Buysshaert C."/>
            <person name="Gielen J."/>
            <person name="Villarroel R."/>
            <person name="De Clercq R."/>
            <person name="van Montagu M."/>
            <person name="Rogers J."/>
            <person name="Cronin A."/>
            <person name="Quail M.A."/>
            <person name="Bray-Allen S."/>
            <person name="Clark L."/>
            <person name="Doggett J."/>
            <person name="Hall S."/>
            <person name="Kay M."/>
            <person name="Lennard N."/>
            <person name="McLay K."/>
            <person name="Mayes R."/>
            <person name="Pettett A."/>
            <person name="Rajandream M.A."/>
            <person name="Lyne M."/>
            <person name="Benes V."/>
            <person name="Rechmann S."/>
            <person name="Borkova D."/>
            <person name="Bloecker H."/>
            <person name="Scharfe M."/>
            <person name="Grimm M."/>
            <person name="Loehnert T.-H."/>
            <person name="Dose S."/>
            <person name="de Haan M."/>
            <person name="Maarse A.C."/>
            <person name="Schaefer M."/>
            <person name="Mueller-Auer S."/>
            <person name="Gabel C."/>
            <person name="Fuchs M."/>
            <person name="Fartmann B."/>
            <person name="Granderath K."/>
            <person name="Dauner D."/>
            <person name="Herzl A."/>
            <person name="Neumann S."/>
            <person name="Argiriou A."/>
            <person name="Vitale D."/>
            <person name="Liguori R."/>
            <person name="Piravandi E."/>
            <person name="Massenet O."/>
            <person name="Quigley F."/>
            <person name="Clabauld G."/>
            <person name="Muendlein A."/>
            <person name="Felber R."/>
            <person name="Schnabl S."/>
            <person name="Hiller R."/>
            <person name="Schmidt W."/>
            <person name="Lecharny A."/>
            <person name="Aubourg S."/>
            <person name="Chefdor F."/>
            <person name="Cooke R."/>
            <person name="Berger C."/>
            <person name="Monfort A."/>
            <person name="Casacuberta E."/>
            <person name="Gibbons T."/>
            <person name="Weber N."/>
            <person name="Vandenbol M."/>
            <person name="Bargues M."/>
            <person name="Terol J."/>
            <person name="Torres A."/>
            <person name="Perez-Perez A."/>
            <person name="Purnelle B."/>
            <person name="Bent E."/>
            <person name="Johnson S."/>
            <person name="Tacon D."/>
            <person name="Jesse T."/>
            <person name="Heijnen L."/>
            <person name="Schwarz S."/>
            <person name="Scholler P."/>
            <person name="Heber S."/>
            <person name="Francs P."/>
            <person name="Bielke C."/>
            <person name="Frishman D."/>
            <person name="Haase D."/>
            <person name="Lemcke K."/>
            <person name="Mewes H.-W."/>
            <person name="Stocker S."/>
            <person name="Zaccaria P."/>
            <person name="Bevan M."/>
            <person name="Wilson R.K."/>
            <person name="de la Bastide M."/>
            <person name="Habermann K."/>
            <person name="Parnell L."/>
            <person name="Dedhia N."/>
            <person name="Gnoj L."/>
            <person name="Schutz K."/>
            <person name="Huang E."/>
            <person name="Spiegel L."/>
            <person name="Sekhon M."/>
            <person name="Murray J."/>
            <person name="Sheet P."/>
            <person name="Cordes M."/>
            <person name="Abu-Threideh J."/>
            <person name="Stoneking T."/>
            <person name="Kalicki J."/>
            <person name="Graves T."/>
            <person name="Harmon G."/>
            <person name="Edwards J."/>
            <person name="Latreille P."/>
            <person name="Courtney L."/>
            <person name="Cloud J."/>
            <person name="Abbott A."/>
            <person name="Scott K."/>
            <person name="Johnson D."/>
            <person name="Minx P."/>
            <person name="Bentley D."/>
            <person name="Fulton B."/>
            <person name="Miller N."/>
            <person name="Greco T."/>
            <person name="Kemp K."/>
            <person name="Kramer J."/>
            <person name="Fulton L."/>
            <person name="Mardis E."/>
            <person name="Dante M."/>
            <person name="Pepin K."/>
            <person name="Hillier L.W."/>
            <person name="Nelson J."/>
            <person name="Spieth J."/>
            <person name="Ryan E."/>
            <person name="Andrews S."/>
            <person name="Geisel C."/>
            <person name="Layman D."/>
            <person name="Du H."/>
            <person name="Ali J."/>
            <person name="Berghoff A."/>
            <person name="Jones K."/>
            <person name="Drone K."/>
            <person name="Cotton M."/>
            <person name="Joshu C."/>
            <person name="Antonoiu B."/>
            <person name="Zidanic M."/>
            <person name="Strong C."/>
            <person name="Sun H."/>
            <person name="Lamar B."/>
            <person name="Yordan C."/>
            <person name="Ma P."/>
            <person name="Zhong J."/>
            <person name="Preston R."/>
            <person name="Vil D."/>
            <person name="Shekher M."/>
            <person name="Matero A."/>
            <person name="Shah R."/>
            <person name="Swaby I.K."/>
            <person name="O'Shaughnessy A."/>
            <person name="Rodriguez M."/>
            <person name="Hoffman J."/>
            <person name="Till S."/>
            <person name="Granat S."/>
            <person name="Shohdy N."/>
            <person name="Hasegawa A."/>
            <person name="Hameed A."/>
            <person name="Lodhi M."/>
            <person name="Johnson A."/>
            <person name="Chen E."/>
            <person name="Marra M.A."/>
            <person name="Martienssen R."/>
            <person name="McCombie W.R."/>
        </authorList>
    </citation>
    <scope>NUCLEOTIDE SEQUENCE [LARGE SCALE GENOMIC DNA]</scope>
    <source>
        <strain>cv. Columbia</strain>
    </source>
</reference>
<reference key="2">
    <citation type="journal article" date="2017" name="Plant J.">
        <title>Araport11: a complete reannotation of the Arabidopsis thaliana reference genome.</title>
        <authorList>
            <person name="Cheng C.Y."/>
            <person name="Krishnakumar V."/>
            <person name="Chan A.P."/>
            <person name="Thibaud-Nissen F."/>
            <person name="Schobel S."/>
            <person name="Town C.D."/>
        </authorList>
    </citation>
    <scope>GENOME REANNOTATION</scope>
    <source>
        <strain>cv. Columbia</strain>
    </source>
</reference>
<reference key="3">
    <citation type="journal article" date="2003" name="Science">
        <title>Empirical analysis of transcriptional activity in the Arabidopsis genome.</title>
        <authorList>
            <person name="Yamada K."/>
            <person name="Lim J."/>
            <person name="Dale J.M."/>
            <person name="Chen H."/>
            <person name="Shinn P."/>
            <person name="Palm C.J."/>
            <person name="Southwick A.M."/>
            <person name="Wu H.C."/>
            <person name="Kim C.J."/>
            <person name="Nguyen M."/>
            <person name="Pham P.K."/>
            <person name="Cheuk R.F."/>
            <person name="Karlin-Newmann G."/>
            <person name="Liu S.X."/>
            <person name="Lam B."/>
            <person name="Sakano H."/>
            <person name="Wu T."/>
            <person name="Yu G."/>
            <person name="Miranda M."/>
            <person name="Quach H.L."/>
            <person name="Tripp M."/>
            <person name="Chang C.H."/>
            <person name="Lee J.M."/>
            <person name="Toriumi M.J."/>
            <person name="Chan M.M."/>
            <person name="Tang C.C."/>
            <person name="Onodera C.S."/>
            <person name="Deng J.M."/>
            <person name="Akiyama K."/>
            <person name="Ansari Y."/>
            <person name="Arakawa T."/>
            <person name="Banh J."/>
            <person name="Banno F."/>
            <person name="Bowser L."/>
            <person name="Brooks S.Y."/>
            <person name="Carninci P."/>
            <person name="Chao Q."/>
            <person name="Choy N."/>
            <person name="Enju A."/>
            <person name="Goldsmith A.D."/>
            <person name="Gurjal M."/>
            <person name="Hansen N.F."/>
            <person name="Hayashizaki Y."/>
            <person name="Johnson-Hopson C."/>
            <person name="Hsuan V.W."/>
            <person name="Iida K."/>
            <person name="Karnes M."/>
            <person name="Khan S."/>
            <person name="Koesema E."/>
            <person name="Ishida J."/>
            <person name="Jiang P.X."/>
            <person name="Jones T."/>
            <person name="Kawai J."/>
            <person name="Kamiya A."/>
            <person name="Meyers C."/>
            <person name="Nakajima M."/>
            <person name="Narusaka M."/>
            <person name="Seki M."/>
            <person name="Sakurai T."/>
            <person name="Satou M."/>
            <person name="Tamse R."/>
            <person name="Vaysberg M."/>
            <person name="Wallender E.K."/>
            <person name="Wong C."/>
            <person name="Yamamura Y."/>
            <person name="Yuan S."/>
            <person name="Shinozaki K."/>
            <person name="Davis R.W."/>
            <person name="Theologis A."/>
            <person name="Ecker J.R."/>
        </authorList>
    </citation>
    <scope>NUCLEOTIDE SEQUENCE [LARGE SCALE MRNA]</scope>
    <source>
        <strain>cv. Columbia</strain>
    </source>
</reference>
<reference key="4">
    <citation type="journal article" date="2009" name="Plant Physiol.">
        <title>Large-scale Arabidopsis phosphoproteome profiling reveals novel chloroplast kinase substrates and phosphorylation networks.</title>
        <authorList>
            <person name="Reiland S."/>
            <person name="Messerli G."/>
            <person name="Baerenfaller K."/>
            <person name="Gerrits B."/>
            <person name="Endler A."/>
            <person name="Grossmann J."/>
            <person name="Gruissem W."/>
            <person name="Baginsky S."/>
        </authorList>
    </citation>
    <scope>PHOSPHORYLATION [LARGE SCALE ANALYSIS] AT SER-33</scope>
    <scope>IDENTIFICATION BY MASS SPECTROMETRY [LARGE SCALE ANALYSIS]</scope>
</reference>
<reference key="5">
    <citation type="journal article" date="2009" name="RNA">
        <title>A comprehensive analysis of the La-motif protein superfamily.</title>
        <authorList>
            <person name="Bousquet-Antonelli C."/>
            <person name="Deragon J.M."/>
        </authorList>
    </citation>
    <scope>GENE FAMILY</scope>
    <scope>NOMENCLATURE</scope>
</reference>
<reference key="6">
    <citation type="journal article" date="2012" name="Mol. Cell. Proteomics">
        <title>Comparative large-scale characterisation of plant vs. mammal proteins reveals similar and idiosyncratic N-alpha acetylation features.</title>
        <authorList>
            <person name="Bienvenut W.V."/>
            <person name="Sumpton D."/>
            <person name="Martinez A."/>
            <person name="Lilla S."/>
            <person name="Espagne C."/>
            <person name="Meinnel T."/>
            <person name="Giglione C."/>
        </authorList>
    </citation>
    <scope>ACETYLATION [LARGE SCALE ANALYSIS] AT ALA-2</scope>
    <scope>CLEAVAGE OF INITIATOR METHIONINE [LARGE SCALE ANALYSIS]</scope>
    <scope>IDENTIFICATION BY MASS SPECTROMETRY [LARGE SCALE ANALYSIS]</scope>
</reference>
<reference key="7">
    <citation type="journal article" date="2012" name="Mol. Cells">
        <title>Overexpression of a LAM domain containing RNA-binding protein LARP1c induces precocious leaf senescence in Arabidopsis.</title>
        <authorList>
            <person name="Zhang B."/>
            <person name="Jia J."/>
            <person name="Yang M."/>
            <person name="Yan C."/>
            <person name="Han Y."/>
        </authorList>
    </citation>
    <scope>FUNCTION</scope>
    <scope>DISRUPTION PHENOTYPE</scope>
    <scope>TISSUE SPECIFICITY</scope>
    <scope>SUBCELLULAR LOCATION</scope>
    <source>
        <strain>cv. Columbia</strain>
        <strain>cv. Wassilewskija</strain>
    </source>
</reference>
<name>LRP1C_ARATH</name>
<dbReference type="EMBL" id="AL022373">
    <property type="protein sequence ID" value="CAA18483.1"/>
    <property type="status" value="ALT_SEQ"/>
    <property type="molecule type" value="Genomic_DNA"/>
</dbReference>
<dbReference type="EMBL" id="AL031986">
    <property type="protein sequence ID" value="CAA21475.1"/>
    <property type="status" value="ALT_SEQ"/>
    <property type="molecule type" value="Genomic_DNA"/>
</dbReference>
<dbReference type="EMBL" id="AL161588">
    <property type="protein sequence ID" value="CAB81498.1"/>
    <property type="status" value="ALT_SEQ"/>
    <property type="molecule type" value="Genomic_DNA"/>
</dbReference>
<dbReference type="EMBL" id="CP002687">
    <property type="protein sequence ID" value="AEE86585.1"/>
    <property type="molecule type" value="Genomic_DNA"/>
</dbReference>
<dbReference type="EMBL" id="AF370207">
    <property type="protein sequence ID" value="AAK44022.1"/>
    <property type="molecule type" value="mRNA"/>
</dbReference>
<dbReference type="EMBL" id="AY133869">
    <property type="protein sequence ID" value="AAM91803.1"/>
    <property type="molecule type" value="mRNA"/>
</dbReference>
<dbReference type="PIR" id="T04699">
    <property type="entry name" value="T04699"/>
</dbReference>
<dbReference type="RefSeq" id="NP_567991.1">
    <property type="nucleotide sequence ID" value="NM_119755.3"/>
</dbReference>
<dbReference type="SMR" id="Q94K80"/>
<dbReference type="FunCoup" id="Q94K80">
    <property type="interactions" value="737"/>
</dbReference>
<dbReference type="STRING" id="3702.Q94K80"/>
<dbReference type="GlyGen" id="Q94K80">
    <property type="glycosylation" value="4 sites, 1 O-linked glycan (3 sites)"/>
</dbReference>
<dbReference type="iPTMnet" id="Q94K80"/>
<dbReference type="PaxDb" id="3702-AT4G35890.1"/>
<dbReference type="ProteomicsDB" id="238613"/>
<dbReference type="EnsemblPlants" id="AT4G35890.1">
    <property type="protein sequence ID" value="AT4G35890.1"/>
    <property type="gene ID" value="AT4G35890"/>
</dbReference>
<dbReference type="GeneID" id="829743"/>
<dbReference type="Gramene" id="AT4G35890.1">
    <property type="protein sequence ID" value="AT4G35890.1"/>
    <property type="gene ID" value="AT4G35890"/>
</dbReference>
<dbReference type="KEGG" id="ath:AT4G35890"/>
<dbReference type="Araport" id="AT4G35890"/>
<dbReference type="TAIR" id="AT4G35890">
    <property type="gene designation" value="LARP1C"/>
</dbReference>
<dbReference type="eggNOG" id="KOG2590">
    <property type="taxonomic scope" value="Eukaryota"/>
</dbReference>
<dbReference type="HOGENOM" id="CLU_026607_1_0_1"/>
<dbReference type="InParanoid" id="Q94K80"/>
<dbReference type="OrthoDB" id="340227at2759"/>
<dbReference type="PhylomeDB" id="Q94K80"/>
<dbReference type="PRO" id="PR:Q94K80"/>
<dbReference type="Proteomes" id="UP000006548">
    <property type="component" value="Chromosome 4"/>
</dbReference>
<dbReference type="ExpressionAtlas" id="Q94K80">
    <property type="expression patterns" value="baseline and differential"/>
</dbReference>
<dbReference type="GO" id="GO:0005737">
    <property type="term" value="C:cytoplasm"/>
    <property type="evidence" value="ECO:0000314"/>
    <property type="project" value="TAIR"/>
</dbReference>
<dbReference type="GO" id="GO:0005886">
    <property type="term" value="C:plasma membrane"/>
    <property type="evidence" value="ECO:0007005"/>
    <property type="project" value="TAIR"/>
</dbReference>
<dbReference type="GO" id="GO:0003729">
    <property type="term" value="F:mRNA binding"/>
    <property type="evidence" value="ECO:0000314"/>
    <property type="project" value="TAIR"/>
</dbReference>
<dbReference type="GO" id="GO:0009738">
    <property type="term" value="P:abscisic acid-activated signaling pathway"/>
    <property type="evidence" value="ECO:0007669"/>
    <property type="project" value="UniProtKB-KW"/>
</dbReference>
<dbReference type="GO" id="GO:0010150">
    <property type="term" value="P:leaf senescence"/>
    <property type="evidence" value="ECO:0000315"/>
    <property type="project" value="TAIR"/>
</dbReference>
<dbReference type="GO" id="GO:0009737">
    <property type="term" value="P:response to abscisic acid"/>
    <property type="evidence" value="ECO:0000315"/>
    <property type="project" value="UniProtKB"/>
</dbReference>
<dbReference type="GO" id="GO:0009753">
    <property type="term" value="P:response to jasmonic acid"/>
    <property type="evidence" value="ECO:0000315"/>
    <property type="project" value="UniProtKB"/>
</dbReference>
<dbReference type="GO" id="GO:0009751">
    <property type="term" value="P:response to salicylic acid"/>
    <property type="evidence" value="ECO:0000315"/>
    <property type="project" value="UniProtKB"/>
</dbReference>
<dbReference type="CDD" id="cd07323">
    <property type="entry name" value="LAM"/>
    <property type="match status" value="1"/>
</dbReference>
<dbReference type="FunFam" id="1.10.10.10:FF:000131">
    <property type="entry name" value="la-related protein 1B isoform X2"/>
    <property type="match status" value="1"/>
</dbReference>
<dbReference type="Gene3D" id="1.10.10.10">
    <property type="entry name" value="Winged helix-like DNA-binding domain superfamily/Winged helix DNA-binding domain"/>
    <property type="match status" value="1"/>
</dbReference>
<dbReference type="InterPro" id="IPR045180">
    <property type="entry name" value="La_dom_prot"/>
</dbReference>
<dbReference type="InterPro" id="IPR006630">
    <property type="entry name" value="La_HTH"/>
</dbReference>
<dbReference type="InterPro" id="IPR036388">
    <property type="entry name" value="WH-like_DNA-bd_sf"/>
</dbReference>
<dbReference type="InterPro" id="IPR036390">
    <property type="entry name" value="WH_DNA-bd_sf"/>
</dbReference>
<dbReference type="PANTHER" id="PTHR22792:SF132">
    <property type="entry name" value="LA-RELATED PROTEIN 1"/>
    <property type="match status" value="1"/>
</dbReference>
<dbReference type="PANTHER" id="PTHR22792">
    <property type="entry name" value="LUPUS LA PROTEIN-RELATED"/>
    <property type="match status" value="1"/>
</dbReference>
<dbReference type="Pfam" id="PF05383">
    <property type="entry name" value="La"/>
    <property type="match status" value="1"/>
</dbReference>
<dbReference type="SMART" id="SM00715">
    <property type="entry name" value="LA"/>
    <property type="match status" value="1"/>
</dbReference>
<dbReference type="SUPFAM" id="SSF46785">
    <property type="entry name" value="Winged helix' DNA-binding domain"/>
    <property type="match status" value="1"/>
</dbReference>
<dbReference type="PROSITE" id="PS50961">
    <property type="entry name" value="HTH_LA"/>
    <property type="match status" value="1"/>
</dbReference>
<sequence length="523" mass="55838">MASATSNNPASSSMSPRRISGNHGSPTASVAQSPRRPSRQVSSPWTQIVRGESEPIAAAAAVAGPSSPQSRAPIEPIASVSVAAPTAAVLTVEAAAGDEKSEASGGQDNAGKKPVWKRPSNGASEVGPVMGASSWPALSETTKAPSNKSSSDSLKSLGDVPSSSSASSSVPVTQGIANASVPAPKQAGRANPNPTPNHSRQRSFKQRNGASGSANGTVSQPSAQGSFTELPSHNPSPRGQNQKNGFASQNHGGTENPSQRDSYRNQNGNHHQSHGGRRNQEHGNQNWTFQRSFNGREGNAQSQRGTPAFVRHPSPTVQPIPQFMAAQPFPSHIPFPTELAQSSYYPRMPYMTPIPHGPQFFYHYQDPPLHMKLHKQIQYYFSDENLITDIYLRGFMNNEGFVPLRVVAGFKKVAELTDNIQQIVEALQNSPHVEVQGDFIRKRDNWQNWVLRRNPTGSGPQSVDRADAVAKRLGNLSVDQSSADPIGGSSSQLQPTEALSDDQQQSSSTAPVSNHNAPDGANR</sequence>
<comment type="function">
    <text evidence="3">Promotes leaf senescence mediated by abscisic acid (ABA), salicylic acid (SA) and jasmonic acid (MeJA), probably though the induction of expression of senescence-associated genes (SAGs) and defense-related genes.</text>
</comment>
<comment type="subcellular location">
    <subcellularLocation>
        <location evidence="3">Cytoplasm</location>
    </subcellularLocation>
    <text>Present in cytoplasmic foci.</text>
</comment>
<comment type="tissue specificity">
    <text evidence="3">Age-dependent accumulation in rosette leaves.</text>
</comment>
<comment type="disruption phenotype">
    <text evidence="3">Impaired abscisic acid- (ABA)-, salicylic acid- (SA)- and jasmonic acid- (MeJA)-induced leaf senescence in detached leaves.</text>
</comment>
<comment type="similarity">
    <text evidence="4">Belongs to the LARP family.</text>
</comment>
<comment type="sequence caution" evidence="4">
    <conflict type="erroneous gene model prediction">
        <sequence resource="EMBL-CDS" id="CAA18483"/>
    </conflict>
</comment>
<comment type="sequence caution" evidence="4">
    <conflict type="erroneous gene model prediction">
        <sequence resource="EMBL-CDS" id="CAA21475"/>
    </conflict>
</comment>
<comment type="sequence caution" evidence="4">
    <conflict type="erroneous gene model prediction">
        <sequence resource="EMBL-CDS" id="CAB81498"/>
    </conflict>
</comment>